<dbReference type="EC" id="2.7.7.49"/>
<dbReference type="EC" id="2.7.7.7"/>
<dbReference type="EC" id="3.1.26.4"/>
<dbReference type="EC" id="3.4.23.-"/>
<dbReference type="EC" id="2.7.7.-" evidence="2"/>
<dbReference type="EC" id="3.1.-.-" evidence="2"/>
<dbReference type="EMBL" id="AJ223851">
    <property type="protein sequence ID" value="CAA11581.1"/>
    <property type="molecule type" value="Genomic_RNA"/>
</dbReference>
<dbReference type="EMBL" id="Y08851">
    <property type="protein sequence ID" value="CAA70075.1"/>
    <property type="molecule type" value="Genomic_DNA"/>
</dbReference>
<dbReference type="RefSeq" id="NP_056914.1">
    <property type="nucleotide sequence ID" value="NC_001871.1"/>
</dbReference>
<dbReference type="RefSeq" id="YP_009513249.1">
    <property type="nucleotide sequence ID" value="NC_039242.1"/>
</dbReference>
<dbReference type="SMR" id="O93209"/>
<dbReference type="MEROPS" id="A09.001"/>
<dbReference type="GeneID" id="37627274"/>
<dbReference type="OrthoDB" id="6514906at2759"/>
<dbReference type="Proteomes" id="UP000008763">
    <property type="component" value="Genome"/>
</dbReference>
<dbReference type="Proteomes" id="UP000201849">
    <property type="component" value="Genome"/>
</dbReference>
<dbReference type="GO" id="GO:0043657">
    <property type="term" value="C:host cell"/>
    <property type="evidence" value="ECO:0007669"/>
    <property type="project" value="GOC"/>
</dbReference>
<dbReference type="GO" id="GO:0030430">
    <property type="term" value="C:host cell cytoplasm"/>
    <property type="evidence" value="ECO:0007669"/>
    <property type="project" value="UniProtKB-SubCell"/>
</dbReference>
<dbReference type="GO" id="GO:0042025">
    <property type="term" value="C:host cell nucleus"/>
    <property type="evidence" value="ECO:0007669"/>
    <property type="project" value="UniProtKB-SubCell"/>
</dbReference>
<dbReference type="GO" id="GO:0044423">
    <property type="term" value="C:virion component"/>
    <property type="evidence" value="ECO:0007669"/>
    <property type="project" value="UniProtKB-KW"/>
</dbReference>
<dbReference type="GO" id="GO:0004190">
    <property type="term" value="F:aspartic-type endopeptidase activity"/>
    <property type="evidence" value="ECO:0007669"/>
    <property type="project" value="UniProtKB-KW"/>
</dbReference>
<dbReference type="GO" id="GO:0003887">
    <property type="term" value="F:DNA-directed DNA polymerase activity"/>
    <property type="evidence" value="ECO:0007669"/>
    <property type="project" value="UniProtKB-KW"/>
</dbReference>
<dbReference type="GO" id="GO:0046872">
    <property type="term" value="F:metal ion binding"/>
    <property type="evidence" value="ECO:0007669"/>
    <property type="project" value="UniProtKB-KW"/>
</dbReference>
<dbReference type="GO" id="GO:0003723">
    <property type="term" value="F:RNA binding"/>
    <property type="evidence" value="ECO:0007669"/>
    <property type="project" value="UniProtKB-KW"/>
</dbReference>
<dbReference type="GO" id="GO:0003964">
    <property type="term" value="F:RNA-directed DNA polymerase activity"/>
    <property type="evidence" value="ECO:0007669"/>
    <property type="project" value="UniProtKB-KW"/>
</dbReference>
<dbReference type="GO" id="GO:0004523">
    <property type="term" value="F:RNA-DNA hybrid ribonuclease activity"/>
    <property type="evidence" value="ECO:0007669"/>
    <property type="project" value="UniProtKB-EC"/>
</dbReference>
<dbReference type="GO" id="GO:0015074">
    <property type="term" value="P:DNA integration"/>
    <property type="evidence" value="ECO:0007669"/>
    <property type="project" value="UniProtKB-KW"/>
</dbReference>
<dbReference type="GO" id="GO:0006310">
    <property type="term" value="P:DNA recombination"/>
    <property type="evidence" value="ECO:0007669"/>
    <property type="project" value="UniProtKB-KW"/>
</dbReference>
<dbReference type="GO" id="GO:0075713">
    <property type="term" value="P:establishment of integrated proviral latency"/>
    <property type="evidence" value="ECO:0007669"/>
    <property type="project" value="UniProtKB-KW"/>
</dbReference>
<dbReference type="GO" id="GO:0006508">
    <property type="term" value="P:proteolysis"/>
    <property type="evidence" value="ECO:0007669"/>
    <property type="project" value="UniProtKB-KW"/>
</dbReference>
<dbReference type="GO" id="GO:0046718">
    <property type="term" value="P:symbiont entry into host cell"/>
    <property type="evidence" value="ECO:0007669"/>
    <property type="project" value="UniProtKB-KW"/>
</dbReference>
<dbReference type="GO" id="GO:0044826">
    <property type="term" value="P:viral genome integration into host DNA"/>
    <property type="evidence" value="ECO:0007669"/>
    <property type="project" value="UniProtKB-KW"/>
</dbReference>
<dbReference type="GO" id="GO:0075732">
    <property type="term" value="P:viral penetration into host nucleus"/>
    <property type="evidence" value="ECO:0007669"/>
    <property type="project" value="UniProtKB-KW"/>
</dbReference>
<dbReference type="Gene3D" id="1.10.340.70">
    <property type="match status" value="1"/>
</dbReference>
<dbReference type="Gene3D" id="2.30.30.140">
    <property type="match status" value="1"/>
</dbReference>
<dbReference type="Gene3D" id="3.30.70.270">
    <property type="match status" value="2"/>
</dbReference>
<dbReference type="Gene3D" id="6.10.20.110">
    <property type="match status" value="1"/>
</dbReference>
<dbReference type="Gene3D" id="2.40.70.10">
    <property type="entry name" value="Acid Proteases"/>
    <property type="match status" value="1"/>
</dbReference>
<dbReference type="Gene3D" id="3.10.10.10">
    <property type="entry name" value="HIV Type 1 Reverse Transcriptase, subunit A, domain 1"/>
    <property type="match status" value="1"/>
</dbReference>
<dbReference type="Gene3D" id="3.30.420.10">
    <property type="entry name" value="Ribonuclease H-like superfamily/Ribonuclease H"/>
    <property type="match status" value="2"/>
</dbReference>
<dbReference type="InterPro" id="IPR043502">
    <property type="entry name" value="DNA/RNA_pol_sf"/>
</dbReference>
<dbReference type="InterPro" id="IPR001584">
    <property type="entry name" value="Integrase_cat-core"/>
</dbReference>
<dbReference type="InterPro" id="IPR041588">
    <property type="entry name" value="Integrase_H2C2"/>
</dbReference>
<dbReference type="InterPro" id="IPR021109">
    <property type="entry name" value="Peptidase_aspartic_dom_sf"/>
</dbReference>
<dbReference type="InterPro" id="IPR050951">
    <property type="entry name" value="Retrovirus_Pol_polyprotein"/>
</dbReference>
<dbReference type="InterPro" id="IPR043128">
    <property type="entry name" value="Rev_trsase/Diguanyl_cyclase"/>
</dbReference>
<dbReference type="InterPro" id="IPR012337">
    <property type="entry name" value="RNaseH-like_sf"/>
</dbReference>
<dbReference type="InterPro" id="IPR002156">
    <property type="entry name" value="RNaseH_domain"/>
</dbReference>
<dbReference type="InterPro" id="IPR036397">
    <property type="entry name" value="RNaseH_sf"/>
</dbReference>
<dbReference type="InterPro" id="IPR000477">
    <property type="entry name" value="RT_dom"/>
</dbReference>
<dbReference type="InterPro" id="IPR041577">
    <property type="entry name" value="RT_RNaseH_2"/>
</dbReference>
<dbReference type="InterPro" id="IPR040903">
    <property type="entry name" value="SH3_11"/>
</dbReference>
<dbReference type="InterPro" id="IPR001641">
    <property type="entry name" value="Spumavirus_A9"/>
</dbReference>
<dbReference type="PANTHER" id="PTHR37984">
    <property type="entry name" value="PROTEIN CBG26694"/>
    <property type="match status" value="1"/>
</dbReference>
<dbReference type="PANTHER" id="PTHR37984:SF5">
    <property type="entry name" value="PROTEIN NYNRIN-LIKE"/>
    <property type="match status" value="1"/>
</dbReference>
<dbReference type="Pfam" id="PF17921">
    <property type="entry name" value="Integrase_H2C2"/>
    <property type="match status" value="1"/>
</dbReference>
<dbReference type="Pfam" id="PF00075">
    <property type="entry name" value="RNase_H"/>
    <property type="match status" value="1"/>
</dbReference>
<dbReference type="Pfam" id="PF17919">
    <property type="entry name" value="RT_RNaseH_2"/>
    <property type="match status" value="1"/>
</dbReference>
<dbReference type="Pfam" id="PF00665">
    <property type="entry name" value="rve"/>
    <property type="match status" value="1"/>
</dbReference>
<dbReference type="Pfam" id="PF00078">
    <property type="entry name" value="RVT_1"/>
    <property type="match status" value="1"/>
</dbReference>
<dbReference type="Pfam" id="PF18103">
    <property type="entry name" value="SH3_11"/>
    <property type="match status" value="1"/>
</dbReference>
<dbReference type="Pfam" id="PF03539">
    <property type="entry name" value="Spuma_A9PTase"/>
    <property type="match status" value="1"/>
</dbReference>
<dbReference type="PRINTS" id="PR00920">
    <property type="entry name" value="SPUMVIRPTASE"/>
</dbReference>
<dbReference type="SUPFAM" id="SSF56672">
    <property type="entry name" value="DNA/RNA polymerases"/>
    <property type="match status" value="1"/>
</dbReference>
<dbReference type="SUPFAM" id="SSF53098">
    <property type="entry name" value="Ribonuclease H-like"/>
    <property type="match status" value="2"/>
</dbReference>
<dbReference type="PROSITE" id="PS51531">
    <property type="entry name" value="FV_PR"/>
    <property type="match status" value="1"/>
</dbReference>
<dbReference type="PROSITE" id="PS50994">
    <property type="entry name" value="INTEGRASE"/>
    <property type="match status" value="1"/>
</dbReference>
<dbReference type="PROSITE" id="PS50879">
    <property type="entry name" value="RNASE_H_1"/>
    <property type="match status" value="1"/>
</dbReference>
<dbReference type="PROSITE" id="PS50878">
    <property type="entry name" value="RT_POL"/>
    <property type="match status" value="1"/>
</dbReference>
<organism>
    <name type="scientific">Feline foamy virus</name>
    <name type="common">FFV</name>
    <name type="synonym">Feline syncytial virus</name>
    <dbReference type="NCBI Taxonomy" id="53182"/>
    <lineage>
        <taxon>Viruses</taxon>
        <taxon>Riboviria</taxon>
        <taxon>Pararnavirae</taxon>
        <taxon>Artverviricota</taxon>
        <taxon>Revtraviricetes</taxon>
        <taxon>Ortervirales</taxon>
        <taxon>Retroviridae</taxon>
        <taxon>Spumaretrovirinae</taxon>
        <taxon>Felispumavirus</taxon>
    </lineage>
</organism>
<feature type="chain" id="PRO_0000244980" description="Pro-Pol polyprotein">
    <location>
        <begin position="1"/>
        <end position="1156"/>
    </location>
</feature>
<feature type="chain" id="PRO_0000244981" description="Protease/Reverse transcriptase/ribonuclease H" evidence="1">
    <location>
        <begin position="1"/>
        <end position="748"/>
    </location>
</feature>
<feature type="chain" id="PRO_0000244982" description="Protease/Reverse transcriptase" evidence="1">
    <location>
        <begin position="1"/>
        <end position="592"/>
    </location>
</feature>
<feature type="chain" id="PRO_0000244983" description="Ribonuclease H" evidence="1">
    <location>
        <begin position="593"/>
        <end position="748"/>
    </location>
</feature>
<feature type="chain" id="PRO_0000244984" description="Integrase" evidence="1">
    <location>
        <begin position="749"/>
        <end position="1143"/>
    </location>
</feature>
<feature type="domain" description="Peptidase A9" evidence="6">
    <location>
        <begin position="1"/>
        <end position="140"/>
    </location>
</feature>
<feature type="domain" description="Reverse transcriptase" evidence="3">
    <location>
        <begin position="183"/>
        <end position="360"/>
    </location>
</feature>
<feature type="domain" description="RNase H type-1" evidence="4">
    <location>
        <begin position="586"/>
        <end position="745"/>
    </location>
</feature>
<feature type="domain" description="Integrase catalytic" evidence="5">
    <location>
        <begin position="869"/>
        <end position="1025"/>
    </location>
</feature>
<feature type="region of interest" description="Disordered" evidence="7">
    <location>
        <begin position="1121"/>
        <end position="1156"/>
    </location>
</feature>
<feature type="compositionally biased region" description="Polar residues" evidence="7">
    <location>
        <begin position="1144"/>
        <end position="1156"/>
    </location>
</feature>
<feature type="active site" description="For protease activity" evidence="6">
    <location>
        <position position="21"/>
    </location>
</feature>
<feature type="binding site" evidence="1">
    <location>
        <position position="249"/>
    </location>
    <ligand>
        <name>Mg(2+)</name>
        <dbReference type="ChEBI" id="CHEBI:18420"/>
        <label>1</label>
        <note>catalytic; for reverse transcriptase activity</note>
    </ligand>
</feature>
<feature type="binding site" evidence="1">
    <location>
        <position position="311"/>
    </location>
    <ligand>
        <name>Mg(2+)</name>
        <dbReference type="ChEBI" id="CHEBI:18420"/>
        <label>1</label>
        <note>catalytic; for reverse transcriptase activity</note>
    </ligand>
</feature>
<feature type="binding site" evidence="1">
    <location>
        <position position="312"/>
    </location>
    <ligand>
        <name>Mg(2+)</name>
        <dbReference type="ChEBI" id="CHEBI:18420"/>
        <label>1</label>
        <note>catalytic; for reverse transcriptase activity</note>
    </ligand>
</feature>
<feature type="binding site" evidence="1">
    <location>
        <position position="595"/>
    </location>
    <ligand>
        <name>Mg(2+)</name>
        <dbReference type="ChEBI" id="CHEBI:18420"/>
        <label>2</label>
        <note>catalytic; for RNase H activity</note>
    </ligand>
</feature>
<feature type="binding site" evidence="1">
    <location>
        <position position="643"/>
    </location>
    <ligand>
        <name>Mg(2+)</name>
        <dbReference type="ChEBI" id="CHEBI:18420"/>
        <label>2</label>
        <note>catalytic; for RNase H activity</note>
    </ligand>
</feature>
<feature type="binding site" evidence="1">
    <location>
        <position position="666"/>
    </location>
    <ligand>
        <name>Mg(2+)</name>
        <dbReference type="ChEBI" id="CHEBI:18420"/>
        <label>2</label>
        <note>catalytic; for RNase H activity</note>
    </ligand>
</feature>
<feature type="binding site" evidence="1">
    <location>
        <position position="737"/>
    </location>
    <ligand>
        <name>Mg(2+)</name>
        <dbReference type="ChEBI" id="CHEBI:18420"/>
        <label>2</label>
        <note>catalytic; for RNase H activity</note>
    </ligand>
</feature>
<feature type="binding site" evidence="1">
    <location>
        <position position="875"/>
    </location>
    <ligand>
        <name>Mg(2+)</name>
        <dbReference type="ChEBI" id="CHEBI:18420"/>
        <label>3</label>
        <note>catalytic; for integrase activity</note>
    </ligand>
</feature>
<feature type="binding site" evidence="1">
    <location>
        <position position="937"/>
    </location>
    <ligand>
        <name>Mg(2+)</name>
        <dbReference type="ChEBI" id="CHEBI:18420"/>
        <label>3</label>
        <note>catalytic; for integrase activity</note>
    </ligand>
</feature>
<feature type="site" description="Cleavage; by viral protease; partial" evidence="1">
    <location>
        <begin position="592"/>
        <end position="593"/>
    </location>
</feature>
<feature type="site" description="Cleavage; by viral protease" evidence="1">
    <location>
        <begin position="748"/>
        <end position="749"/>
    </location>
</feature>
<name>POL_FFV</name>
<comment type="function">
    <text evidence="1">The aspartyl protease activity mediates proteolytic cleavages of Gag and Pol polyproteins. The reverse transcriptase (RT) activity converts the viral RNA genome into dsDNA in the cytoplasm, shortly after virus entry into the cell (early reverse transcription) or after proviral DNA transcription (late reverse transcription). RT consists of a DNA polymerase activity that can copy either DNA or RNA templates, and a ribonuclease H (RNase H) activity that cleaves the RNA strand of RNA-DNA heteroduplexes in a partially processive 3' to 5' endonucleasic mode. Conversion of viral genomic RNA into dsDNA requires many steps. A tRNA-Lys1,2 binds to the primer-binding site (PBS) situated at the 5'-end of the viral RNA. RT uses the 3' end of the tRNA primer to perform a short round of RNA-dependent minus-strand DNA synthesis. The reading proceeds through the U5 region and ends after the repeated (R) region which is present at both ends of viral RNA. The portion of the RNA-DNA heteroduplex is digested by the RNase H, resulting in a ssDNA product attached to the tRNA primer. This ssDNA/tRNA hybridizes with the identical R region situated at the 3' end of viral RNA. This template exchange, known as minus-strand DNA strong stop transfer, can be either intra- or intermolecular. RT uses the 3' end of this newly synthesized short ssDNA to perform the RNA-dependent minus-strand DNA synthesis of the whole template. RNase H digests the RNA template except for a polypurine tract (PPT) situated at the 5'-end and near the center of the genome. It is not clear if both polymerase and RNase H activities are simultaneous. RNase H probably can proceed both in a polymerase-dependent (RNA cut into small fragments by the same RT performing DNA synthesis) and a polymerase-independent mode (cleavage of remaining RNA fragments by free RTs). Secondly, RT performs DNA-directed plus-strand DNA synthesis using the PPT that has not been removed by RNase H as primer. PPT and tRNA primers are then removed by RNase H. The 3' and 5' ssDNA PBS regions hybridize to form a circular dsDNA intermediate. Strand displacement synthesis by RT to the PBS and PPT ends produces a blunt ended, linear dsDNA copy of the viral genome that includes long terminal repeats (LTRs) at both ends (By similarity).</text>
</comment>
<comment type="function">
    <text evidence="1">Integrase catalyzes viral DNA integration into the host chromosome, by performing a series of DNA cutting and joining reactions. This enzyme activity takes place after virion entry into a cell and reverse transcription of the RNA genome in dsDNA. The first step in the integration process is 3' processing. This step requires a complex comprising at least the viral genome, matrix protein, and integrase. This complex is called the pre-integration complex (PIC). The integrase protein removes 2 nucleotides from the 3' end of the viral DNA right (U5) end, leaving the left (U3) intact. In the second step, the PIC enters cell nucleus. This process is mediated through the integrase and allows the virus to infect both dividing (nuclear membrane disassembled) and G1/S-arrested cells (active translocation), but with no viral gene expression in the latter. In the third step, termed strand transfer, the integrase protein joins the previously processed 3' ends to the 5' ends of strands of target cellular DNA at the site of integration. It is however not clear how integration then proceeds to resolve the asymmetrical cleavage of viral DNA (By similarity).</text>
</comment>
<comment type="catalytic activity">
    <reaction evidence="4">
        <text>Endonucleolytic cleavage to 5'-phosphomonoester.</text>
        <dbReference type="EC" id="3.1.26.4"/>
    </reaction>
</comment>
<comment type="catalytic activity">
    <reaction evidence="3">
        <text>DNA(n) + a 2'-deoxyribonucleoside 5'-triphosphate = DNA(n+1) + diphosphate</text>
        <dbReference type="Rhea" id="RHEA:22508"/>
        <dbReference type="Rhea" id="RHEA-COMP:17339"/>
        <dbReference type="Rhea" id="RHEA-COMP:17340"/>
        <dbReference type="ChEBI" id="CHEBI:33019"/>
        <dbReference type="ChEBI" id="CHEBI:61560"/>
        <dbReference type="ChEBI" id="CHEBI:173112"/>
        <dbReference type="EC" id="2.7.7.49"/>
    </reaction>
</comment>
<comment type="catalytic activity">
    <reaction evidence="3">
        <text>DNA(n) + a 2'-deoxyribonucleoside 5'-triphosphate = DNA(n+1) + diphosphate</text>
        <dbReference type="Rhea" id="RHEA:22508"/>
        <dbReference type="Rhea" id="RHEA-COMP:17339"/>
        <dbReference type="Rhea" id="RHEA-COMP:17340"/>
        <dbReference type="ChEBI" id="CHEBI:33019"/>
        <dbReference type="ChEBI" id="CHEBI:61560"/>
        <dbReference type="ChEBI" id="CHEBI:173112"/>
        <dbReference type="EC" id="2.7.7.7"/>
    </reaction>
</comment>
<comment type="cofactor">
    <cofactor evidence="1">
        <name>Mg(2+)</name>
        <dbReference type="ChEBI" id="CHEBI:18420"/>
    </cofactor>
    <text evidence="1">Binds 2 magnesium ions for reverse transcriptase polymerase activity.</text>
</comment>
<comment type="cofactor">
    <cofactor evidence="1">
        <name>Mg(2+)</name>
        <dbReference type="ChEBI" id="CHEBI:18420"/>
    </cofactor>
    <text evidence="1">Binds 2 magnesium ions for ribonuclease H (RNase H) activity. Substrate-binding is a precondition for magnesium binding.</text>
</comment>
<comment type="cofactor">
    <cofactor evidence="1">
        <name>Mg(2+)</name>
        <dbReference type="ChEBI" id="CHEBI:18420"/>
    </cofactor>
    <text evidence="1">Magnesium ions are required for integrase activity. Binds at least 1, maybe 2 magnesium ions.</text>
</comment>
<comment type="subcellular location">
    <molecule>Integrase</molecule>
    <subcellularLocation>
        <location evidence="8">Virion</location>
    </subcellularLocation>
    <subcellularLocation>
        <location evidence="1">Host nucleus</location>
    </subcellularLocation>
    <subcellularLocation>
        <location evidence="8">Host cytoplasm</location>
    </subcellularLocation>
    <text evidence="8">Nuclear at initial phase, cytoplasmic at assembly.</text>
</comment>
<comment type="subcellular location">
    <molecule>Protease/Reverse transcriptase/ribonuclease H</molecule>
    <subcellularLocation>
        <location evidence="1">Host nucleus</location>
    </subcellularLocation>
    <subcellularLocation>
        <location evidence="8">Host cytoplasm</location>
    </subcellularLocation>
    <text evidence="8">Nuclear at initial phase, cytoplasmic at assembly.</text>
</comment>
<comment type="domain">
    <text evidence="1">The reverse transcriptase/ribonuclease H (RT) is structured in five subdomains: finger, palm, thumb, connection and RNase H. Within the palm subdomain, the 'primer grip' region is thought to be involved in the positioning of the primer terminus for accommodating the incoming nucleotide. The RNase H domain stabilizes the association of RT with primer-template (By similarity).</text>
</comment>
<comment type="domain">
    <text evidence="1">Integrase core domain contains the D-x(n)-D-x(35)-E motif, named for the phylogenetically conserved glutamic acid and aspartic acid residues and the invariant 35 amino acid spacing between the second and third acidic residues. Each acidic residue of the D,D(35)E motif is independently essential for the 3'-processing and strand transfer activities of purified integrase protein (By similarity).</text>
</comment>
<comment type="PTM">
    <text evidence="1">Specific enzymatic cleavages in vivo by viral protease yield mature proteins. The protease is not cleaved off from Pol. Since cleavage efficiency is not optimal for all sites, long and active p65Pro-RT, p87Pro-RT-RNaseH and even some Pr125Pol are detected in infected cells (By similarity).</text>
</comment>
<comment type="miscellaneous">
    <text>The reverse transcriptase is an error-prone enzyme that lacks a proof-reading function. High mutations rate is a direct consequence of this characteristic. RT also displays frequent template switching leading to high recombination rate. Recombination mostly occurs between homologous regions of the two copackaged RNA genomes. If these two RNA molecules derive from different viral strains, reverse transcription will give rise to highly recombinated proviral DNAs.</text>
</comment>
<comment type="miscellaneous">
    <text>Foamy viruses are distinct from other retroviruses in many respects. Their protease is active as an uncleaved Pro-Pol protein. Mature particles do not include the usual processed retroviral structural protein (MA, CA and NC), but instead contain two large Gag proteins. Their functional nucleic acid appears to be either RNA or dsDNA (up to 20% of extracellular particles), because they probably proceed either to an early (before integration) or late reverse transcription (after assembly). Foamy viruses have the ability to retrotranspose intracellularly with high efficiency. They bud predominantly into the endoplasmic reticulum (ER) and occasionally at the plasma membrane. Budding requires the presence of Env proteins. Most viral particles probably remain within the infected cell.</text>
</comment>
<protein>
    <recommendedName>
        <fullName>Pro-Pol polyprotein</fullName>
    </recommendedName>
    <alternativeName>
        <fullName>Pr125Pol</fullName>
    </alternativeName>
    <component>
        <recommendedName>
            <fullName>Protease/Reverse transcriptase/ribonuclease H</fullName>
            <ecNumber>2.7.7.49</ecNumber>
            <ecNumber>2.7.7.7</ecNumber>
            <ecNumber>3.1.26.4</ecNumber>
            <ecNumber>3.4.23.-</ecNumber>
        </recommendedName>
        <alternativeName>
            <fullName>p87Pro-RT-RNaseH</fullName>
        </alternativeName>
    </component>
    <component>
        <recommendedName>
            <fullName>Protease/Reverse transcriptase</fullName>
            <ecNumber>2.7.7.49</ecNumber>
            <ecNumber>2.7.7.7</ecNumber>
            <ecNumber>3.4.23.-</ecNumber>
        </recommendedName>
        <alternativeName>
            <fullName>p65Pro-RT</fullName>
        </alternativeName>
    </component>
    <component>
        <recommendedName>
            <fullName>Ribonuclease H</fullName>
            <shortName>RNase H</shortName>
            <ecNumber>3.1.26.4</ecNumber>
        </recommendedName>
    </component>
    <component>
        <recommendedName>
            <fullName>Integrase</fullName>
            <shortName>IN</shortName>
            <ecNumber evidence="2">2.7.7.-</ecNumber>
            <ecNumber evidence="2">3.1.-.-</ecNumber>
        </recommendedName>
        <alternativeName>
            <fullName>p42In</fullName>
        </alternativeName>
    </component>
</protein>
<gene>
    <name type="primary">pol</name>
</gene>
<reference key="1">
    <citation type="journal article" date="1997" name="J. Virol.">
        <title>Characterization of the genome of feline foamy virus and its proteins shows distinct features different from those of primate Spumaviruses.</title>
        <authorList>
            <person name="Winkler I."/>
            <person name="Bodem J."/>
            <person name="Haas L."/>
            <person name="Zemba M."/>
            <person name="Delius H."/>
            <person name="Flower R."/>
            <person name="Fluegel R.M."/>
            <person name="Loechelt M."/>
        </authorList>
    </citation>
    <scope>NUCLEOTIDE SEQUENCE [GENOMIC DNA]</scope>
</reference>
<reference key="2">
    <citation type="journal article" date="1998" name="Virology">
        <title>Detection of subgenomic cDNAs and mapping of feline foamy virus mRNAs reveals complex patterns of transcription.</title>
        <authorList>
            <person name="Bodem J."/>
            <person name="Loechelt M."/>
            <person name="Delius H."/>
            <person name="Fluegel R.M."/>
        </authorList>
    </citation>
    <scope>NUCLEOTIDE SEQUENCE [GENOMIC RNA]</scope>
    <source>
        <strain>Isolate FUV</strain>
    </source>
</reference>
<sequence length="1156" mass="131499">MDLLKPLTVERKGVKIKGYWDSQADITCVPKDLLQGEEPVRQQNVTTIHGTQEGDVYYVNLKIDGRRINTEVIGTTLDYAIITPGDVPWILKKPLELTIKLDLEEQQGTLLNNSILSKKGKEELKQLFEKYSALWQSWENQVGHRRIRPHKIATGTVKPTPQKQYHINPKAKPDIQIVINDLLKQGVLIQKESTMNTPVYPVPKPNGRWRMVLDYRAVNKVTPLIAVQNQHSYGILGSLFKGRYKTTIDLSNGFWAHPIVPEDYWITAFTWQGKQYCWTVLPQGFLNSPGLFTGDVVDLLQGIPNVEVYVDDVYISHDSEKEHLEYLDILFNRLKEAGYIISLKKSNIANSIVDFLGFQITNEGRGLTDTFKEKLENITAPTTLKQLQSILGLLNFARNFIPDFTELIAPLYALIPKSTKNYVPWQIEHSTTLETLITKLNGAEYLQGRKGDKTLIMKVNASYTTGYIRYYNEGEKKPISYVSIVFSKTELKFTELEKLLTTVHKGLLKALDLSMGQNIHVYSPIVSMQNIQKTPQTAKKALASRWLSWLSYLEDPRIRFFYDPQMPALKDLPAVDTGKDNKKHPSNFQHIFYTDGSAITSPTKEGHLNAGMGIVYFINKDGNLQKQQEWSISLGNHTAQFAEIAAFEFALKKCLPLGGNILVVTDSNYVAKAYNEELDVWASNGFVNNRKKPLKHISKWKSVADLKRLRPDVVVTHEPGHQKLDSSPHAYGNNLADQLATQASFKVHMTKNPKLDIEQIKAIQACQNNERLPVGYPKQYTYELQNNKCMVLRKDGWREIPPSRERYKLIKEAHNISHAGREAVLLKIQENYWWPKMKKDISSFLSTCNVCKMVNPLNLKPISPQAIVHPTKPFDKFYMDYIGPLPPSEGYVHVLVVVDAATGFTWLYPTKAQTSKATIKVLNHLTGLAIPKVLHSDQGSAFTSEEFAQWAKERNIQLEFSTPYHPQSSGKVERKNSEIKKLLTKLLVGRPLKWYNLISSVQLALNNTHVVSTKYTPHQLMFGIDCNLPFANKDTLDWTREEELALLQEIRESLQHPVQPPTCSGWSPYVGQLVQERVYRPSQLRPKWRKPTKVLEILNPRTVIIVDHLGQRKSVSIDNLKPTAHQHNGTRTCDDPEGMDGMECSQTTTETSVDSS</sequence>
<accession>O93209</accession>
<keyword id="KW-0064">Aspartyl protease</keyword>
<keyword id="KW-0229">DNA integration</keyword>
<keyword id="KW-0233">DNA recombination</keyword>
<keyword id="KW-0239">DNA-directed DNA polymerase</keyword>
<keyword id="KW-0255">Endonuclease</keyword>
<keyword id="KW-1035">Host cytoplasm</keyword>
<keyword id="KW-1048">Host nucleus</keyword>
<keyword id="KW-0378">Hydrolase</keyword>
<keyword id="KW-0460">Magnesium</keyword>
<keyword id="KW-0479">Metal-binding</keyword>
<keyword id="KW-0511">Multifunctional enzyme</keyword>
<keyword id="KW-0540">Nuclease</keyword>
<keyword id="KW-0548">Nucleotidyltransferase</keyword>
<keyword id="KW-0645">Protease</keyword>
<keyword id="KW-1185">Reference proteome</keyword>
<keyword id="KW-0694">RNA-binding</keyword>
<keyword id="KW-0695">RNA-directed DNA polymerase</keyword>
<keyword id="KW-0808">Transferase</keyword>
<keyword id="KW-1179">Viral genome integration</keyword>
<keyword id="KW-1163">Viral penetration into host nucleus</keyword>
<keyword id="KW-0946">Virion</keyword>
<keyword id="KW-1160">Virus entry into host cell</keyword>
<organismHost>
    <name type="scientific">Felis catus</name>
    <name type="common">Cat</name>
    <name type="synonym">Felis silvestris catus</name>
    <dbReference type="NCBI Taxonomy" id="9685"/>
</organismHost>
<evidence type="ECO:0000250" key="1"/>
<evidence type="ECO:0000250" key="2">
    <source>
        <dbReference type="UniProtKB" id="Q87040"/>
    </source>
</evidence>
<evidence type="ECO:0000255" key="3">
    <source>
        <dbReference type="PROSITE-ProRule" id="PRU00405"/>
    </source>
</evidence>
<evidence type="ECO:0000255" key="4">
    <source>
        <dbReference type="PROSITE-ProRule" id="PRU00408"/>
    </source>
</evidence>
<evidence type="ECO:0000255" key="5">
    <source>
        <dbReference type="PROSITE-ProRule" id="PRU00457"/>
    </source>
</evidence>
<evidence type="ECO:0000255" key="6">
    <source>
        <dbReference type="PROSITE-ProRule" id="PRU00863"/>
    </source>
</evidence>
<evidence type="ECO:0000256" key="7">
    <source>
        <dbReference type="SAM" id="MobiDB-lite"/>
    </source>
</evidence>
<evidence type="ECO:0000305" key="8"/>
<proteinExistence type="inferred from homology"/>